<protein>
    <recommendedName>
        <fullName evidence="1">Small ribosomal subunit protein uS15</fullName>
    </recommendedName>
    <alternativeName>
        <fullName evidence="2">30S ribosomal protein S15</fullName>
    </alternativeName>
</protein>
<feature type="chain" id="PRO_0000354220" description="Small ribosomal subunit protein uS15">
    <location>
        <begin position="1"/>
        <end position="87"/>
    </location>
</feature>
<reference key="1">
    <citation type="submission" date="2007-08" db="EMBL/GenBank/DDBJ databases">
        <title>Complete sequence of Thermotoga lettingae TMO.</title>
        <authorList>
            <consortium name="US DOE Joint Genome Institute"/>
            <person name="Copeland A."/>
            <person name="Lucas S."/>
            <person name="Lapidus A."/>
            <person name="Barry K."/>
            <person name="Glavina del Rio T."/>
            <person name="Dalin E."/>
            <person name="Tice H."/>
            <person name="Pitluck S."/>
            <person name="Foster B."/>
            <person name="Bruce D."/>
            <person name="Schmutz J."/>
            <person name="Larimer F."/>
            <person name="Land M."/>
            <person name="Hauser L."/>
            <person name="Kyrpides N."/>
            <person name="Mikhailova N."/>
            <person name="Nelson K."/>
            <person name="Gogarten J.P."/>
            <person name="Noll K."/>
            <person name="Richardson P."/>
        </authorList>
    </citation>
    <scope>NUCLEOTIDE SEQUENCE [LARGE SCALE GENOMIC DNA]</scope>
    <source>
        <strain>ATCC BAA-301 / DSM 14385 / NBRC 107922 / TMO</strain>
    </source>
</reference>
<name>RS15_PSELT</name>
<evidence type="ECO:0000255" key="1">
    <source>
        <dbReference type="HAMAP-Rule" id="MF_01343"/>
    </source>
</evidence>
<evidence type="ECO:0000305" key="2"/>
<proteinExistence type="inferred from homology"/>
<organism>
    <name type="scientific">Pseudothermotoga lettingae (strain ATCC BAA-301 / DSM 14385 / NBRC 107922 / TMO)</name>
    <name type="common">Thermotoga lettingae</name>
    <dbReference type="NCBI Taxonomy" id="416591"/>
    <lineage>
        <taxon>Bacteria</taxon>
        <taxon>Thermotogati</taxon>
        <taxon>Thermotogota</taxon>
        <taxon>Thermotogae</taxon>
        <taxon>Thermotogales</taxon>
        <taxon>Thermotogaceae</taxon>
        <taxon>Pseudothermotoga</taxon>
    </lineage>
</organism>
<accession>A8F724</accession>
<sequence length="87" mass="10366">MNQEEKKKIIEQFRINEKDTGSAEVQVAILTARIRHLTEHLKAHPKDFHSRRGLMKMVGRRRKLLRYLRKSNPESYKSLIEKLNLRG</sequence>
<comment type="function">
    <text evidence="1">One of the primary rRNA binding proteins, it binds directly to 16S rRNA where it helps nucleate assembly of the platform of the 30S subunit by binding and bridging several RNA helices of the 16S rRNA.</text>
</comment>
<comment type="function">
    <text evidence="1">Forms an intersubunit bridge (bridge B4) with the 23S rRNA of the 50S subunit in the ribosome.</text>
</comment>
<comment type="subunit">
    <text evidence="1">Part of the 30S ribosomal subunit. Forms a bridge to the 50S subunit in the 70S ribosome, contacting the 23S rRNA.</text>
</comment>
<comment type="similarity">
    <text evidence="1">Belongs to the universal ribosomal protein uS15 family.</text>
</comment>
<gene>
    <name evidence="1" type="primary">rpsO</name>
    <name type="ordered locus">Tlet_1401</name>
</gene>
<keyword id="KW-1185">Reference proteome</keyword>
<keyword id="KW-0687">Ribonucleoprotein</keyword>
<keyword id="KW-0689">Ribosomal protein</keyword>
<keyword id="KW-0694">RNA-binding</keyword>
<keyword id="KW-0699">rRNA-binding</keyword>
<dbReference type="EMBL" id="CP000812">
    <property type="protein sequence ID" value="ABV33958.1"/>
    <property type="molecule type" value="Genomic_DNA"/>
</dbReference>
<dbReference type="RefSeq" id="WP_012003434.1">
    <property type="nucleotide sequence ID" value="NZ_BSDV01000001.1"/>
</dbReference>
<dbReference type="SMR" id="A8F724"/>
<dbReference type="STRING" id="416591.Tlet_1401"/>
<dbReference type="KEGG" id="tle:Tlet_1401"/>
<dbReference type="eggNOG" id="COG0184">
    <property type="taxonomic scope" value="Bacteria"/>
</dbReference>
<dbReference type="HOGENOM" id="CLU_148518_0_0_0"/>
<dbReference type="Proteomes" id="UP000002016">
    <property type="component" value="Chromosome"/>
</dbReference>
<dbReference type="GO" id="GO:0022627">
    <property type="term" value="C:cytosolic small ribosomal subunit"/>
    <property type="evidence" value="ECO:0007669"/>
    <property type="project" value="TreeGrafter"/>
</dbReference>
<dbReference type="GO" id="GO:0019843">
    <property type="term" value="F:rRNA binding"/>
    <property type="evidence" value="ECO:0007669"/>
    <property type="project" value="UniProtKB-UniRule"/>
</dbReference>
<dbReference type="GO" id="GO:0003735">
    <property type="term" value="F:structural constituent of ribosome"/>
    <property type="evidence" value="ECO:0007669"/>
    <property type="project" value="InterPro"/>
</dbReference>
<dbReference type="GO" id="GO:0006412">
    <property type="term" value="P:translation"/>
    <property type="evidence" value="ECO:0007669"/>
    <property type="project" value="UniProtKB-UniRule"/>
</dbReference>
<dbReference type="CDD" id="cd00353">
    <property type="entry name" value="Ribosomal_S15p_S13e"/>
    <property type="match status" value="1"/>
</dbReference>
<dbReference type="FunFam" id="1.10.287.10:FF:000002">
    <property type="entry name" value="30S ribosomal protein S15"/>
    <property type="match status" value="1"/>
</dbReference>
<dbReference type="Gene3D" id="6.10.250.3130">
    <property type="match status" value="1"/>
</dbReference>
<dbReference type="Gene3D" id="1.10.287.10">
    <property type="entry name" value="S15/NS1, RNA-binding"/>
    <property type="match status" value="1"/>
</dbReference>
<dbReference type="HAMAP" id="MF_01343_B">
    <property type="entry name" value="Ribosomal_uS15_B"/>
    <property type="match status" value="1"/>
</dbReference>
<dbReference type="InterPro" id="IPR000589">
    <property type="entry name" value="Ribosomal_uS15"/>
</dbReference>
<dbReference type="InterPro" id="IPR005290">
    <property type="entry name" value="Ribosomal_uS15_bac-type"/>
</dbReference>
<dbReference type="InterPro" id="IPR009068">
    <property type="entry name" value="uS15_NS1_RNA-bd_sf"/>
</dbReference>
<dbReference type="NCBIfam" id="TIGR00952">
    <property type="entry name" value="S15_bact"/>
    <property type="match status" value="1"/>
</dbReference>
<dbReference type="PANTHER" id="PTHR23321">
    <property type="entry name" value="RIBOSOMAL PROTEIN S15, BACTERIAL AND ORGANELLAR"/>
    <property type="match status" value="1"/>
</dbReference>
<dbReference type="PANTHER" id="PTHR23321:SF26">
    <property type="entry name" value="SMALL RIBOSOMAL SUBUNIT PROTEIN US15M"/>
    <property type="match status" value="1"/>
</dbReference>
<dbReference type="Pfam" id="PF00312">
    <property type="entry name" value="Ribosomal_S15"/>
    <property type="match status" value="1"/>
</dbReference>
<dbReference type="SMART" id="SM01387">
    <property type="entry name" value="Ribosomal_S15"/>
    <property type="match status" value="1"/>
</dbReference>
<dbReference type="SUPFAM" id="SSF47060">
    <property type="entry name" value="S15/NS1 RNA-binding domain"/>
    <property type="match status" value="1"/>
</dbReference>
<dbReference type="PROSITE" id="PS00362">
    <property type="entry name" value="RIBOSOMAL_S15"/>
    <property type="match status" value="1"/>
</dbReference>